<protein>
    <recommendedName>
        <fullName evidence="2">Venom allergen 5</fullName>
    </recommendedName>
    <alternativeName>
        <fullName>Antigen 5</fullName>
        <shortName evidence="2">Ag5</shortName>
    </alternativeName>
    <alternativeName>
        <fullName>Cysteine-rich venom protein</fullName>
        <shortName>CRVP</shortName>
    </alternativeName>
    <allergenName>Vesp ma 5</allergenName>
</protein>
<reference key="1">
    <citation type="journal article" date="2012" name="PLoS ONE">
        <title>Purification and characterization of two new allergens from the venom of Vespa magnifica.</title>
        <authorList>
            <person name="An S."/>
            <person name="Chen L."/>
            <person name="Wei J.F."/>
            <person name="Yang X."/>
            <person name="Ma D."/>
            <person name="Xu X."/>
            <person name="Xu X."/>
            <person name="He S."/>
            <person name="Lu J."/>
            <person name="Lai R."/>
        </authorList>
    </citation>
    <scope>NUCLEOTIDE SEQUENCE [MRNA]</scope>
    <scope>PROTEIN SEQUENCE OF 24-48; 96-117; 130-152; 172-184 AND 204-220</scope>
    <scope>SUBCELLULAR LOCATION</scope>
    <scope>TISSUE SPECIFICITY</scope>
    <scope>ALLERGEN</scope>
    <source>
        <tissue>Venom</tissue>
        <tissue>Venom gland</tissue>
    </source>
</reference>
<organism>
    <name type="scientific">Vespa magnifica</name>
    <name type="common">Hornet</name>
    <dbReference type="NCBI Taxonomy" id="202807"/>
    <lineage>
        <taxon>Eukaryota</taxon>
        <taxon>Metazoa</taxon>
        <taxon>Ecdysozoa</taxon>
        <taxon>Arthropoda</taxon>
        <taxon>Hexapoda</taxon>
        <taxon>Insecta</taxon>
        <taxon>Pterygota</taxon>
        <taxon>Neoptera</taxon>
        <taxon>Endopterygota</taxon>
        <taxon>Hymenoptera</taxon>
        <taxon>Apocrita</taxon>
        <taxon>Aculeata</taxon>
        <taxon>Vespoidea</taxon>
        <taxon>Vespidae</taxon>
        <taxon>Vespinae</taxon>
        <taxon>Vespa</taxon>
    </lineage>
</organism>
<name>VA5_VESMG</name>
<proteinExistence type="evidence at protein level"/>
<evidence type="ECO:0000250" key="1"/>
<evidence type="ECO:0000250" key="2">
    <source>
        <dbReference type="UniProtKB" id="P81657"/>
    </source>
</evidence>
<evidence type="ECO:0000269" key="3">
    <source>
    </source>
</evidence>
<evidence type="ECO:0000305" key="4"/>
<dbReference type="EMBL" id="FR774918">
    <property type="protein sequence ID" value="CBY93636.1"/>
    <property type="molecule type" value="mRNA"/>
</dbReference>
<dbReference type="SMR" id="P86870"/>
<dbReference type="Allergome" id="9487">
    <property type="allergen name" value="Vesp ma 5"/>
</dbReference>
<dbReference type="GO" id="GO:0005576">
    <property type="term" value="C:extracellular region"/>
    <property type="evidence" value="ECO:0007669"/>
    <property type="project" value="UniProtKB-SubCell"/>
</dbReference>
<dbReference type="CDD" id="cd05380">
    <property type="entry name" value="CAP_euk"/>
    <property type="match status" value="1"/>
</dbReference>
<dbReference type="Gene3D" id="3.40.33.10">
    <property type="entry name" value="CAP"/>
    <property type="match status" value="1"/>
</dbReference>
<dbReference type="InterPro" id="IPR018244">
    <property type="entry name" value="Allrgn_V5/Tpx1_CS"/>
</dbReference>
<dbReference type="InterPro" id="IPR014044">
    <property type="entry name" value="CAP_dom"/>
</dbReference>
<dbReference type="InterPro" id="IPR035940">
    <property type="entry name" value="CAP_sf"/>
</dbReference>
<dbReference type="InterPro" id="IPR001283">
    <property type="entry name" value="CRISP-related"/>
</dbReference>
<dbReference type="InterPro" id="IPR002413">
    <property type="entry name" value="V5_allergen-like"/>
</dbReference>
<dbReference type="PANTHER" id="PTHR10334">
    <property type="entry name" value="CYSTEINE-RICH SECRETORY PROTEIN-RELATED"/>
    <property type="match status" value="1"/>
</dbReference>
<dbReference type="Pfam" id="PF00188">
    <property type="entry name" value="CAP"/>
    <property type="match status" value="1"/>
</dbReference>
<dbReference type="PRINTS" id="PR00838">
    <property type="entry name" value="V5ALLERGEN"/>
</dbReference>
<dbReference type="PRINTS" id="PR00837">
    <property type="entry name" value="V5TPXLIKE"/>
</dbReference>
<dbReference type="SMART" id="SM00198">
    <property type="entry name" value="SCP"/>
    <property type="match status" value="1"/>
</dbReference>
<dbReference type="SUPFAM" id="SSF55797">
    <property type="entry name" value="PR-1-like"/>
    <property type="match status" value="1"/>
</dbReference>
<dbReference type="PROSITE" id="PS01009">
    <property type="entry name" value="CRISP_1"/>
    <property type="match status" value="1"/>
</dbReference>
<dbReference type="PROSITE" id="PS01010">
    <property type="entry name" value="CRISP_2"/>
    <property type="match status" value="1"/>
</dbReference>
<accession>P86870</accession>
<accession>E8ZX84</accession>
<comment type="subcellular location">
    <subcellularLocation>
        <location evidence="3">Secreted</location>
    </subcellularLocation>
</comment>
<comment type="tissue specificity">
    <text evidence="3">Expressed by the venom gland.</text>
</comment>
<comment type="allergen">
    <text evidence="3">Causes an allergic reaction in human.</text>
</comment>
<comment type="similarity">
    <text evidence="4">Belongs to the CRISP family. Venom allergen 5-like subfamily.</text>
</comment>
<feature type="signal peptide" evidence="3">
    <location>
        <begin position="1"/>
        <end position="23"/>
    </location>
</feature>
<feature type="chain" id="PRO_5000706181" description="Venom allergen 5">
    <location>
        <begin position="24"/>
        <end position="225"/>
    </location>
</feature>
<feature type="domain" description="SCP">
    <location>
        <begin position="69"/>
        <end position="210"/>
    </location>
</feature>
<feature type="disulfide bond" evidence="1">
    <location>
        <begin position="27"/>
        <end position="39"/>
    </location>
</feature>
<feature type="disulfide bond" evidence="1">
    <location>
        <begin position="31"/>
        <end position="124"/>
    </location>
</feature>
<feature type="disulfide bond" evidence="1">
    <location>
        <begin position="49"/>
        <end position="117"/>
    </location>
</feature>
<feature type="disulfide bond" evidence="1">
    <location>
        <begin position="191"/>
        <end position="208"/>
    </location>
</feature>
<keyword id="KW-0020">Allergen</keyword>
<keyword id="KW-0903">Direct protein sequencing</keyword>
<keyword id="KW-1015">Disulfide bond</keyword>
<keyword id="KW-0964">Secreted</keyword>
<keyword id="KW-0732">Signal</keyword>
<sequence>MKISGFVYLILITTIINLSFSEANNYCKIKCRSGIHTLCKFGISTKPNCGKNVVKGSGLTKAEKLEILKQHNEFRQKVARGLETRGKPGPQPPAKSMNTLVWNDELAQIAQVWASQCKYGHDDCRNTAKHSVGQNIAQQSTTAASFGSVSNMVQMWADEVKNYQYGSTKNKLIEVGHYTQMVWAKTKEIGCGSIKYIENGWHRHYLVCNYGPAGNIGNEPIYEKK</sequence>